<evidence type="ECO:0000255" key="1">
    <source>
        <dbReference type="PROSITE-ProRule" id="PRU00086"/>
    </source>
</evidence>
<evidence type="ECO:0000256" key="2">
    <source>
        <dbReference type="SAM" id="MobiDB-lite"/>
    </source>
</evidence>
<evidence type="ECO:0007829" key="3">
    <source>
        <dbReference type="PDB" id="1UHT"/>
    </source>
</evidence>
<dbReference type="EMBL" id="Z97336">
    <property type="protein sequence ID" value="CAB10228.1"/>
    <property type="molecule type" value="Genomic_DNA"/>
</dbReference>
<dbReference type="EMBL" id="AL161539">
    <property type="protein sequence ID" value="CAB78491.1"/>
    <property type="molecule type" value="Genomic_DNA"/>
</dbReference>
<dbReference type="EMBL" id="CP002687">
    <property type="protein sequence ID" value="AEE83450.1"/>
    <property type="molecule type" value="Genomic_DNA"/>
</dbReference>
<dbReference type="EMBL" id="AY099748">
    <property type="protein sequence ID" value="AAM20599.1"/>
    <property type="molecule type" value="mRNA"/>
</dbReference>
<dbReference type="EMBL" id="AY128865">
    <property type="protein sequence ID" value="AAM91265.1"/>
    <property type="molecule type" value="mRNA"/>
</dbReference>
<dbReference type="PIR" id="B71407">
    <property type="entry name" value="B71407"/>
</dbReference>
<dbReference type="RefSeq" id="NP_193185.1">
    <property type="nucleotide sequence ID" value="NM_117529.3"/>
</dbReference>
<dbReference type="PDB" id="1UHT">
    <property type="method" value="NMR"/>
    <property type="chains" value="A=1-105"/>
</dbReference>
<dbReference type="PDBsum" id="1UHT"/>
<dbReference type="BMRB" id="O23305"/>
<dbReference type="SMR" id="O23305"/>
<dbReference type="BioGRID" id="12393">
    <property type="interactions" value="2"/>
</dbReference>
<dbReference type="FunCoup" id="O23305">
    <property type="interactions" value="99"/>
</dbReference>
<dbReference type="IntAct" id="O23305">
    <property type="interactions" value="2"/>
</dbReference>
<dbReference type="STRING" id="3702.O23305"/>
<dbReference type="PaxDb" id="3702-AT4G14490.1"/>
<dbReference type="EnsemblPlants" id="AT4G14490.1">
    <property type="protein sequence ID" value="AT4G14490.1"/>
    <property type="gene ID" value="AT4G14490"/>
</dbReference>
<dbReference type="GeneID" id="827096"/>
<dbReference type="Gramene" id="AT4G14490.1">
    <property type="protein sequence ID" value="AT4G14490.1"/>
    <property type="gene ID" value="AT4G14490"/>
</dbReference>
<dbReference type="KEGG" id="ath:AT4G14490"/>
<dbReference type="Araport" id="AT4G14490"/>
<dbReference type="TAIR" id="AT4G14490"/>
<dbReference type="eggNOG" id="ENOG502SF2R">
    <property type="taxonomic scope" value="Eukaryota"/>
</dbReference>
<dbReference type="HOGENOM" id="CLU_041860_0_0_1"/>
<dbReference type="InParanoid" id="O23305"/>
<dbReference type="OMA" id="YMAQQKE"/>
<dbReference type="PhylomeDB" id="O23305"/>
<dbReference type="EvolutionaryTrace" id="O23305"/>
<dbReference type="PRO" id="PR:O23305"/>
<dbReference type="Proteomes" id="UP000006548">
    <property type="component" value="Chromosome 4"/>
</dbReference>
<dbReference type="ExpressionAtlas" id="O23305">
    <property type="expression patterns" value="baseline and differential"/>
</dbReference>
<dbReference type="CDD" id="cd22678">
    <property type="entry name" value="FHA_PP2C70-like"/>
    <property type="match status" value="1"/>
</dbReference>
<dbReference type="Gene3D" id="2.60.200.20">
    <property type="match status" value="1"/>
</dbReference>
<dbReference type="InterPro" id="IPR050923">
    <property type="entry name" value="Cell_Proc_Reg/RNA_Proc"/>
</dbReference>
<dbReference type="InterPro" id="IPR000253">
    <property type="entry name" value="FHA_dom"/>
</dbReference>
<dbReference type="InterPro" id="IPR008984">
    <property type="entry name" value="SMAD_FHA_dom_sf"/>
</dbReference>
<dbReference type="PANTHER" id="PTHR23308">
    <property type="entry name" value="NUCLEAR INHIBITOR OF PROTEIN PHOSPHATASE-1"/>
    <property type="match status" value="1"/>
</dbReference>
<dbReference type="Pfam" id="PF00498">
    <property type="entry name" value="FHA"/>
    <property type="match status" value="1"/>
</dbReference>
<dbReference type="SMART" id="SM00240">
    <property type="entry name" value="FHA"/>
    <property type="match status" value="1"/>
</dbReference>
<dbReference type="SUPFAM" id="SSF49879">
    <property type="entry name" value="SMAD/FHA domain"/>
    <property type="match status" value="1"/>
</dbReference>
<dbReference type="PROSITE" id="PS50006">
    <property type="entry name" value="FHA_DOMAIN"/>
    <property type="match status" value="1"/>
</dbReference>
<sequence length="386" mass="43367">MVTPSLRLVFVKGPREGDALDYKPGSTIRVGRIVRGNEIAIKDAGISTKHLRIESDSGNWVIQDLGSSNGTLLNSNALDPETSVNLGDGDVIKLGEYTSILVNFVIDDFQEKKLTRNNRRQANARKRIRVLESINLGDITEEEKGLDVKFENKPSSRVRKVRKIEDSEKLGITDGLQEDLVEKNGSFRNVESIQSSSVNLIKVEMEDCAMVEENLGRGLKKRVSSKATRSKKIEESVGKACLGVVNVEKVETLKEKRITRATRSKKIDIVGDSYLELDMVLNRARKNKGKNKKADQKPLKSFENDEVTDSGEQGLSCHVEEDMNNELDTDLRKMTLGALFSFLEGHLSKEIIHKTENMIEPMRSKTQRVREYISDQRKVQAKACMC</sequence>
<keyword id="KW-0002">3D-structure</keyword>
<keyword id="KW-1185">Reference proteome</keyword>
<organism>
    <name type="scientific">Arabidopsis thaliana</name>
    <name type="common">Mouse-ear cress</name>
    <dbReference type="NCBI Taxonomy" id="3702"/>
    <lineage>
        <taxon>Eukaryota</taxon>
        <taxon>Viridiplantae</taxon>
        <taxon>Streptophyta</taxon>
        <taxon>Embryophyta</taxon>
        <taxon>Tracheophyta</taxon>
        <taxon>Spermatophyta</taxon>
        <taxon>Magnoliopsida</taxon>
        <taxon>eudicotyledons</taxon>
        <taxon>Gunneridae</taxon>
        <taxon>Pentapetalae</taxon>
        <taxon>rosids</taxon>
        <taxon>malvids</taxon>
        <taxon>Brassicales</taxon>
        <taxon>Brassicaceae</taxon>
        <taxon>Camelineae</taxon>
        <taxon>Arabidopsis</taxon>
    </lineage>
</organism>
<gene>
    <name type="ordered locus">At4g14490</name>
    <name type="ORF">dl3285c</name>
</gene>
<name>Y4449_ARATH</name>
<accession>O23305</accession>
<proteinExistence type="evidence at protein level"/>
<feature type="chain" id="PRO_0000220609" description="FHA domain-containing protein At4g14490">
    <location>
        <begin position="1"/>
        <end position="386"/>
    </location>
</feature>
<feature type="domain" description="FHA" evidence="1">
    <location>
        <begin position="28"/>
        <end position="78"/>
    </location>
</feature>
<feature type="region of interest" description="Disordered" evidence="2">
    <location>
        <begin position="286"/>
        <end position="311"/>
    </location>
</feature>
<feature type="compositionally biased region" description="Basic and acidic residues" evidence="2">
    <location>
        <begin position="292"/>
        <end position="303"/>
    </location>
</feature>
<feature type="strand" evidence="3">
    <location>
        <begin position="5"/>
        <end position="13"/>
    </location>
</feature>
<feature type="turn" evidence="3">
    <location>
        <begin position="14"/>
        <end position="17"/>
    </location>
</feature>
<feature type="strand" evidence="3">
    <location>
        <begin position="28"/>
        <end position="34"/>
    </location>
</feature>
<feature type="strand" evidence="3">
    <location>
        <begin position="38"/>
        <end position="40"/>
    </location>
</feature>
<feature type="strand" evidence="3">
    <location>
        <begin position="43"/>
        <end position="46"/>
    </location>
</feature>
<feature type="strand" evidence="3">
    <location>
        <begin position="51"/>
        <end position="55"/>
    </location>
</feature>
<feature type="strand" evidence="3">
    <location>
        <begin position="57"/>
        <end position="63"/>
    </location>
</feature>
<feature type="strand" evidence="3">
    <location>
        <begin position="72"/>
        <end position="77"/>
    </location>
</feature>
<feature type="strand" evidence="3">
    <location>
        <begin position="83"/>
        <end position="85"/>
    </location>
</feature>
<feature type="strand" evidence="3">
    <location>
        <begin position="90"/>
        <end position="94"/>
    </location>
</feature>
<feature type="turn" evidence="3">
    <location>
        <begin position="95"/>
        <end position="97"/>
    </location>
</feature>
<feature type="strand" evidence="3">
    <location>
        <begin position="98"/>
        <end position="105"/>
    </location>
</feature>
<reference key="1">
    <citation type="journal article" date="1998" name="Nature">
        <title>Analysis of 1.9 Mb of contiguous sequence from chromosome 4 of Arabidopsis thaliana.</title>
        <authorList>
            <person name="Bevan M."/>
            <person name="Bancroft I."/>
            <person name="Bent E."/>
            <person name="Love K."/>
            <person name="Goodman H.M."/>
            <person name="Dean C."/>
            <person name="Bergkamp R."/>
            <person name="Dirkse W."/>
            <person name="van Staveren M."/>
            <person name="Stiekema W."/>
            <person name="Drost L."/>
            <person name="Ridley P."/>
            <person name="Hudson S.-A."/>
            <person name="Patel K."/>
            <person name="Murphy G."/>
            <person name="Piffanelli P."/>
            <person name="Wedler H."/>
            <person name="Wedler E."/>
            <person name="Wambutt R."/>
            <person name="Weitzenegger T."/>
            <person name="Pohl T."/>
            <person name="Terryn N."/>
            <person name="Gielen J."/>
            <person name="Villarroel R."/>
            <person name="De Clercq R."/>
            <person name="van Montagu M."/>
            <person name="Lecharny A."/>
            <person name="Aubourg S."/>
            <person name="Gy I."/>
            <person name="Kreis M."/>
            <person name="Lao N."/>
            <person name="Kavanagh T."/>
            <person name="Hempel S."/>
            <person name="Kotter P."/>
            <person name="Entian K.-D."/>
            <person name="Rieger M."/>
            <person name="Schaefer M."/>
            <person name="Funk B."/>
            <person name="Mueller-Auer S."/>
            <person name="Silvey M."/>
            <person name="James R."/>
            <person name="Monfort A."/>
            <person name="Pons A."/>
            <person name="Puigdomenech P."/>
            <person name="Douka A."/>
            <person name="Voukelatou E."/>
            <person name="Milioni D."/>
            <person name="Hatzopoulos P."/>
            <person name="Piravandi E."/>
            <person name="Obermaier B."/>
            <person name="Hilbert H."/>
            <person name="Duesterhoeft A."/>
            <person name="Moores T."/>
            <person name="Jones J.D.G."/>
            <person name="Eneva T."/>
            <person name="Palme K."/>
            <person name="Benes V."/>
            <person name="Rechmann S."/>
            <person name="Ansorge W."/>
            <person name="Cooke R."/>
            <person name="Berger C."/>
            <person name="Delseny M."/>
            <person name="Voet M."/>
            <person name="Volckaert G."/>
            <person name="Mewes H.-W."/>
            <person name="Klosterman S."/>
            <person name="Schueller C."/>
            <person name="Chalwatzis N."/>
        </authorList>
    </citation>
    <scope>NUCLEOTIDE SEQUENCE [LARGE SCALE GENOMIC DNA]</scope>
    <source>
        <strain>cv. Columbia</strain>
    </source>
</reference>
<reference key="2">
    <citation type="journal article" date="1999" name="Nature">
        <title>Sequence and analysis of chromosome 4 of the plant Arabidopsis thaliana.</title>
        <authorList>
            <person name="Mayer K.F.X."/>
            <person name="Schueller C."/>
            <person name="Wambutt R."/>
            <person name="Murphy G."/>
            <person name="Volckaert G."/>
            <person name="Pohl T."/>
            <person name="Duesterhoeft A."/>
            <person name="Stiekema W."/>
            <person name="Entian K.-D."/>
            <person name="Terryn N."/>
            <person name="Harris B."/>
            <person name="Ansorge W."/>
            <person name="Brandt P."/>
            <person name="Grivell L.A."/>
            <person name="Rieger M."/>
            <person name="Weichselgartner M."/>
            <person name="de Simone V."/>
            <person name="Obermaier B."/>
            <person name="Mache R."/>
            <person name="Mueller M."/>
            <person name="Kreis M."/>
            <person name="Delseny M."/>
            <person name="Puigdomenech P."/>
            <person name="Watson M."/>
            <person name="Schmidtheini T."/>
            <person name="Reichert B."/>
            <person name="Portetelle D."/>
            <person name="Perez-Alonso M."/>
            <person name="Boutry M."/>
            <person name="Bancroft I."/>
            <person name="Vos P."/>
            <person name="Hoheisel J."/>
            <person name="Zimmermann W."/>
            <person name="Wedler H."/>
            <person name="Ridley P."/>
            <person name="Langham S.-A."/>
            <person name="McCullagh B."/>
            <person name="Bilham L."/>
            <person name="Robben J."/>
            <person name="van der Schueren J."/>
            <person name="Grymonprez B."/>
            <person name="Chuang Y.-J."/>
            <person name="Vandenbussche F."/>
            <person name="Braeken M."/>
            <person name="Weltjens I."/>
            <person name="Voet M."/>
            <person name="Bastiaens I."/>
            <person name="Aert R."/>
            <person name="Defoor E."/>
            <person name="Weitzenegger T."/>
            <person name="Bothe G."/>
            <person name="Ramsperger U."/>
            <person name="Hilbert H."/>
            <person name="Braun M."/>
            <person name="Holzer E."/>
            <person name="Brandt A."/>
            <person name="Peters S."/>
            <person name="van Staveren M."/>
            <person name="Dirkse W."/>
            <person name="Mooijman P."/>
            <person name="Klein Lankhorst R."/>
            <person name="Rose M."/>
            <person name="Hauf J."/>
            <person name="Koetter P."/>
            <person name="Berneiser S."/>
            <person name="Hempel S."/>
            <person name="Feldpausch M."/>
            <person name="Lamberth S."/>
            <person name="Van den Daele H."/>
            <person name="De Keyser A."/>
            <person name="Buysshaert C."/>
            <person name="Gielen J."/>
            <person name="Villarroel R."/>
            <person name="De Clercq R."/>
            <person name="van Montagu M."/>
            <person name="Rogers J."/>
            <person name="Cronin A."/>
            <person name="Quail M.A."/>
            <person name="Bray-Allen S."/>
            <person name="Clark L."/>
            <person name="Doggett J."/>
            <person name="Hall S."/>
            <person name="Kay M."/>
            <person name="Lennard N."/>
            <person name="McLay K."/>
            <person name="Mayes R."/>
            <person name="Pettett A."/>
            <person name="Rajandream M.A."/>
            <person name="Lyne M."/>
            <person name="Benes V."/>
            <person name="Rechmann S."/>
            <person name="Borkova D."/>
            <person name="Bloecker H."/>
            <person name="Scharfe M."/>
            <person name="Grimm M."/>
            <person name="Loehnert T.-H."/>
            <person name="Dose S."/>
            <person name="de Haan M."/>
            <person name="Maarse A.C."/>
            <person name="Schaefer M."/>
            <person name="Mueller-Auer S."/>
            <person name="Gabel C."/>
            <person name="Fuchs M."/>
            <person name="Fartmann B."/>
            <person name="Granderath K."/>
            <person name="Dauner D."/>
            <person name="Herzl A."/>
            <person name="Neumann S."/>
            <person name="Argiriou A."/>
            <person name="Vitale D."/>
            <person name="Liguori R."/>
            <person name="Piravandi E."/>
            <person name="Massenet O."/>
            <person name="Quigley F."/>
            <person name="Clabauld G."/>
            <person name="Muendlein A."/>
            <person name="Felber R."/>
            <person name="Schnabl S."/>
            <person name="Hiller R."/>
            <person name="Schmidt W."/>
            <person name="Lecharny A."/>
            <person name="Aubourg S."/>
            <person name="Chefdor F."/>
            <person name="Cooke R."/>
            <person name="Berger C."/>
            <person name="Monfort A."/>
            <person name="Casacuberta E."/>
            <person name="Gibbons T."/>
            <person name="Weber N."/>
            <person name="Vandenbol M."/>
            <person name="Bargues M."/>
            <person name="Terol J."/>
            <person name="Torres A."/>
            <person name="Perez-Perez A."/>
            <person name="Purnelle B."/>
            <person name="Bent E."/>
            <person name="Johnson S."/>
            <person name="Tacon D."/>
            <person name="Jesse T."/>
            <person name="Heijnen L."/>
            <person name="Schwarz S."/>
            <person name="Scholler P."/>
            <person name="Heber S."/>
            <person name="Francs P."/>
            <person name="Bielke C."/>
            <person name="Frishman D."/>
            <person name="Haase D."/>
            <person name="Lemcke K."/>
            <person name="Mewes H.-W."/>
            <person name="Stocker S."/>
            <person name="Zaccaria P."/>
            <person name="Bevan M."/>
            <person name="Wilson R.K."/>
            <person name="de la Bastide M."/>
            <person name="Habermann K."/>
            <person name="Parnell L."/>
            <person name="Dedhia N."/>
            <person name="Gnoj L."/>
            <person name="Schutz K."/>
            <person name="Huang E."/>
            <person name="Spiegel L."/>
            <person name="Sekhon M."/>
            <person name="Murray J."/>
            <person name="Sheet P."/>
            <person name="Cordes M."/>
            <person name="Abu-Threideh J."/>
            <person name="Stoneking T."/>
            <person name="Kalicki J."/>
            <person name="Graves T."/>
            <person name="Harmon G."/>
            <person name="Edwards J."/>
            <person name="Latreille P."/>
            <person name="Courtney L."/>
            <person name="Cloud J."/>
            <person name="Abbott A."/>
            <person name="Scott K."/>
            <person name="Johnson D."/>
            <person name="Minx P."/>
            <person name="Bentley D."/>
            <person name="Fulton B."/>
            <person name="Miller N."/>
            <person name="Greco T."/>
            <person name="Kemp K."/>
            <person name="Kramer J."/>
            <person name="Fulton L."/>
            <person name="Mardis E."/>
            <person name="Dante M."/>
            <person name="Pepin K."/>
            <person name="Hillier L.W."/>
            <person name="Nelson J."/>
            <person name="Spieth J."/>
            <person name="Ryan E."/>
            <person name="Andrews S."/>
            <person name="Geisel C."/>
            <person name="Layman D."/>
            <person name="Du H."/>
            <person name="Ali J."/>
            <person name="Berghoff A."/>
            <person name="Jones K."/>
            <person name="Drone K."/>
            <person name="Cotton M."/>
            <person name="Joshu C."/>
            <person name="Antonoiu B."/>
            <person name="Zidanic M."/>
            <person name="Strong C."/>
            <person name="Sun H."/>
            <person name="Lamar B."/>
            <person name="Yordan C."/>
            <person name="Ma P."/>
            <person name="Zhong J."/>
            <person name="Preston R."/>
            <person name="Vil D."/>
            <person name="Shekher M."/>
            <person name="Matero A."/>
            <person name="Shah R."/>
            <person name="Swaby I.K."/>
            <person name="O'Shaughnessy A."/>
            <person name="Rodriguez M."/>
            <person name="Hoffman J."/>
            <person name="Till S."/>
            <person name="Granat S."/>
            <person name="Shohdy N."/>
            <person name="Hasegawa A."/>
            <person name="Hameed A."/>
            <person name="Lodhi M."/>
            <person name="Johnson A."/>
            <person name="Chen E."/>
            <person name="Marra M.A."/>
            <person name="Martienssen R."/>
            <person name="McCombie W.R."/>
        </authorList>
    </citation>
    <scope>NUCLEOTIDE SEQUENCE [LARGE SCALE GENOMIC DNA]</scope>
    <source>
        <strain>cv. Columbia</strain>
    </source>
</reference>
<reference key="3">
    <citation type="journal article" date="2017" name="Plant J.">
        <title>Araport11: a complete reannotation of the Arabidopsis thaliana reference genome.</title>
        <authorList>
            <person name="Cheng C.Y."/>
            <person name="Krishnakumar V."/>
            <person name="Chan A.P."/>
            <person name="Thibaud-Nissen F."/>
            <person name="Schobel S."/>
            <person name="Town C.D."/>
        </authorList>
    </citation>
    <scope>GENOME REANNOTATION</scope>
    <source>
        <strain>cv. Columbia</strain>
    </source>
</reference>
<reference key="4">
    <citation type="journal article" date="2003" name="Science">
        <title>Empirical analysis of transcriptional activity in the Arabidopsis genome.</title>
        <authorList>
            <person name="Yamada K."/>
            <person name="Lim J."/>
            <person name="Dale J.M."/>
            <person name="Chen H."/>
            <person name="Shinn P."/>
            <person name="Palm C.J."/>
            <person name="Southwick A.M."/>
            <person name="Wu H.C."/>
            <person name="Kim C.J."/>
            <person name="Nguyen M."/>
            <person name="Pham P.K."/>
            <person name="Cheuk R.F."/>
            <person name="Karlin-Newmann G."/>
            <person name="Liu S.X."/>
            <person name="Lam B."/>
            <person name="Sakano H."/>
            <person name="Wu T."/>
            <person name="Yu G."/>
            <person name="Miranda M."/>
            <person name="Quach H.L."/>
            <person name="Tripp M."/>
            <person name="Chang C.H."/>
            <person name="Lee J.M."/>
            <person name="Toriumi M.J."/>
            <person name="Chan M.M."/>
            <person name="Tang C.C."/>
            <person name="Onodera C.S."/>
            <person name="Deng J.M."/>
            <person name="Akiyama K."/>
            <person name="Ansari Y."/>
            <person name="Arakawa T."/>
            <person name="Banh J."/>
            <person name="Banno F."/>
            <person name="Bowser L."/>
            <person name="Brooks S.Y."/>
            <person name="Carninci P."/>
            <person name="Chao Q."/>
            <person name="Choy N."/>
            <person name="Enju A."/>
            <person name="Goldsmith A.D."/>
            <person name="Gurjal M."/>
            <person name="Hansen N.F."/>
            <person name="Hayashizaki Y."/>
            <person name="Johnson-Hopson C."/>
            <person name="Hsuan V.W."/>
            <person name="Iida K."/>
            <person name="Karnes M."/>
            <person name="Khan S."/>
            <person name="Koesema E."/>
            <person name="Ishida J."/>
            <person name="Jiang P.X."/>
            <person name="Jones T."/>
            <person name="Kawai J."/>
            <person name="Kamiya A."/>
            <person name="Meyers C."/>
            <person name="Nakajima M."/>
            <person name="Narusaka M."/>
            <person name="Seki M."/>
            <person name="Sakurai T."/>
            <person name="Satou M."/>
            <person name="Tamse R."/>
            <person name="Vaysberg M."/>
            <person name="Wallender E.K."/>
            <person name="Wong C."/>
            <person name="Yamamura Y."/>
            <person name="Yuan S."/>
            <person name="Shinozaki K."/>
            <person name="Davis R.W."/>
            <person name="Theologis A."/>
            <person name="Ecker J.R."/>
        </authorList>
    </citation>
    <scope>NUCLEOTIDE SEQUENCE [LARGE SCALE MRNA]</scope>
    <source>
        <strain>cv. Columbia</strain>
    </source>
</reference>
<reference key="5">
    <citation type="submission" date="2004-01" db="PDB data bank">
        <title>Solution structure of the FHA domain of Arabidopsis thaliana hypothetical protein.</title>
        <authorList>
            <consortium name="RIKEN structural genomics initiative (RSGI)"/>
        </authorList>
    </citation>
    <scope>STRUCTURE BY NMR OF 1-105</scope>
</reference>
<protein>
    <recommendedName>
        <fullName>FHA domain-containing protein At4g14490</fullName>
    </recommendedName>
</protein>